<gene>
    <name evidence="1" type="primary">thiQ</name>
    <name type="ordered locus">mll3864</name>
</gene>
<comment type="function">
    <text evidence="1">Part of the ABC transporter complex ThiBPQ involved in thiamine import. Responsible for energy coupling to the transport system.</text>
</comment>
<comment type="catalytic activity">
    <reaction evidence="1">
        <text>thiamine(out) + ATP + H2O = thiamine(in) + ADP + phosphate + H(+)</text>
        <dbReference type="Rhea" id="RHEA:29811"/>
        <dbReference type="ChEBI" id="CHEBI:15377"/>
        <dbReference type="ChEBI" id="CHEBI:15378"/>
        <dbReference type="ChEBI" id="CHEBI:18385"/>
        <dbReference type="ChEBI" id="CHEBI:30616"/>
        <dbReference type="ChEBI" id="CHEBI:43474"/>
        <dbReference type="ChEBI" id="CHEBI:456216"/>
        <dbReference type="EC" id="7.6.2.15"/>
    </reaction>
</comment>
<comment type="subunit">
    <text evidence="1">The complex is composed of two ATP-binding proteins (ThiQ), two transmembrane proteins (ThiP) and a solute-binding protein (ThiB).</text>
</comment>
<comment type="subcellular location">
    <subcellularLocation>
        <location evidence="1">Cell inner membrane</location>
        <topology evidence="1">Peripheral membrane protein</topology>
    </subcellularLocation>
</comment>
<comment type="similarity">
    <text evidence="1">Belongs to the ABC transporter superfamily. Thiamine importer (TC 3.A.1.19.1) family.</text>
</comment>
<organism>
    <name type="scientific">Mesorhizobium japonicum (strain LMG 29417 / CECT 9101 / MAFF 303099)</name>
    <name type="common">Mesorhizobium loti (strain MAFF 303099)</name>
    <dbReference type="NCBI Taxonomy" id="266835"/>
    <lineage>
        <taxon>Bacteria</taxon>
        <taxon>Pseudomonadati</taxon>
        <taxon>Pseudomonadota</taxon>
        <taxon>Alphaproteobacteria</taxon>
        <taxon>Hyphomicrobiales</taxon>
        <taxon>Phyllobacteriaceae</taxon>
        <taxon>Mesorhizobium</taxon>
    </lineage>
</organism>
<reference key="1">
    <citation type="journal article" date="2000" name="DNA Res.">
        <title>Complete genome structure of the nitrogen-fixing symbiotic bacterium Mesorhizobium loti.</title>
        <authorList>
            <person name="Kaneko T."/>
            <person name="Nakamura Y."/>
            <person name="Sato S."/>
            <person name="Asamizu E."/>
            <person name="Kato T."/>
            <person name="Sasamoto S."/>
            <person name="Watanabe A."/>
            <person name="Idesawa K."/>
            <person name="Ishikawa A."/>
            <person name="Kawashima K."/>
            <person name="Kimura T."/>
            <person name="Kishida Y."/>
            <person name="Kiyokawa C."/>
            <person name="Kohara M."/>
            <person name="Matsumoto M."/>
            <person name="Matsuno A."/>
            <person name="Mochizuki Y."/>
            <person name="Nakayama S."/>
            <person name="Nakazaki N."/>
            <person name="Shimpo S."/>
            <person name="Sugimoto M."/>
            <person name="Takeuchi C."/>
            <person name="Yamada M."/>
            <person name="Tabata S."/>
        </authorList>
    </citation>
    <scope>NUCLEOTIDE SEQUENCE [LARGE SCALE GENOMIC DNA]</scope>
    <source>
        <strain>LMG 29417 / CECT 9101 / MAFF 303099</strain>
    </source>
</reference>
<accession>Q98FA5</accession>
<protein>
    <recommendedName>
        <fullName evidence="1">Thiamine import ATP-binding protein ThiQ</fullName>
        <ecNumber evidence="1">7.6.2.15</ecNumber>
    </recommendedName>
</protein>
<sequence length="253" mass="26616">MRGKGVPVRLDKVSFSYGEAPLTFDVAFAAAEITAIMGPSGSGKSTLLNLVAGFETPQSGGVLIGGVDVGAAPPAARPVSMVFQENNLFAHLSVEQNVGLGRSPSLRLTEVDREAIDGALARTGLGGKEKRLPRELSGGERQRVALARVLVRDRPVLLLDEPFASLGPALRDDMLDLVAGVHAERGMTVLFVTHQPQDARRIGRNVVFLDNGTVAATGSADDFFAGAGPEAFRRYIGASAGNAVSQDIARKRT</sequence>
<dbReference type="EC" id="7.6.2.15" evidence="1"/>
<dbReference type="EMBL" id="BA000012">
    <property type="protein sequence ID" value="BAB50662.1"/>
    <property type="molecule type" value="Genomic_DNA"/>
</dbReference>
<dbReference type="RefSeq" id="WP_010912005.1">
    <property type="nucleotide sequence ID" value="NC_002678.2"/>
</dbReference>
<dbReference type="SMR" id="Q98FA5"/>
<dbReference type="KEGG" id="mlo:mll3864"/>
<dbReference type="eggNOG" id="COG3840">
    <property type="taxonomic scope" value="Bacteria"/>
</dbReference>
<dbReference type="HOGENOM" id="CLU_000604_1_22_5"/>
<dbReference type="Proteomes" id="UP000000552">
    <property type="component" value="Chromosome"/>
</dbReference>
<dbReference type="GO" id="GO:0005886">
    <property type="term" value="C:plasma membrane"/>
    <property type="evidence" value="ECO:0007669"/>
    <property type="project" value="UniProtKB-SubCell"/>
</dbReference>
<dbReference type="GO" id="GO:0048502">
    <property type="term" value="F:ABC-type thiamine transporter activity"/>
    <property type="evidence" value="ECO:0007669"/>
    <property type="project" value="UniProtKB-EC"/>
</dbReference>
<dbReference type="GO" id="GO:0005524">
    <property type="term" value="F:ATP binding"/>
    <property type="evidence" value="ECO:0007669"/>
    <property type="project" value="UniProtKB-KW"/>
</dbReference>
<dbReference type="GO" id="GO:0016887">
    <property type="term" value="F:ATP hydrolysis activity"/>
    <property type="evidence" value="ECO:0007669"/>
    <property type="project" value="InterPro"/>
</dbReference>
<dbReference type="CDD" id="cd03298">
    <property type="entry name" value="ABC_ThiQ_thiamine_transporter"/>
    <property type="match status" value="1"/>
</dbReference>
<dbReference type="Gene3D" id="3.40.50.300">
    <property type="entry name" value="P-loop containing nucleotide triphosphate hydrolases"/>
    <property type="match status" value="1"/>
</dbReference>
<dbReference type="InterPro" id="IPR003593">
    <property type="entry name" value="AAA+_ATPase"/>
</dbReference>
<dbReference type="InterPro" id="IPR050093">
    <property type="entry name" value="ABC_SmlMolc_Importer"/>
</dbReference>
<dbReference type="InterPro" id="IPR003439">
    <property type="entry name" value="ABC_transporter-like_ATP-bd"/>
</dbReference>
<dbReference type="InterPro" id="IPR017871">
    <property type="entry name" value="ABC_transporter-like_CS"/>
</dbReference>
<dbReference type="InterPro" id="IPR027417">
    <property type="entry name" value="P-loop_NTPase"/>
</dbReference>
<dbReference type="InterPro" id="IPR005968">
    <property type="entry name" value="Thiamine_ABC_ThiQ"/>
</dbReference>
<dbReference type="NCBIfam" id="TIGR01277">
    <property type="entry name" value="thiQ"/>
    <property type="match status" value="1"/>
</dbReference>
<dbReference type="PANTHER" id="PTHR42781">
    <property type="entry name" value="SPERMIDINE/PUTRESCINE IMPORT ATP-BINDING PROTEIN POTA"/>
    <property type="match status" value="1"/>
</dbReference>
<dbReference type="PANTHER" id="PTHR42781:SF1">
    <property type="entry name" value="THIAMINE IMPORT ATP-BINDING PROTEIN THIQ"/>
    <property type="match status" value="1"/>
</dbReference>
<dbReference type="Pfam" id="PF00005">
    <property type="entry name" value="ABC_tran"/>
    <property type="match status" value="1"/>
</dbReference>
<dbReference type="SMART" id="SM00382">
    <property type="entry name" value="AAA"/>
    <property type="match status" value="1"/>
</dbReference>
<dbReference type="SUPFAM" id="SSF52540">
    <property type="entry name" value="P-loop containing nucleoside triphosphate hydrolases"/>
    <property type="match status" value="1"/>
</dbReference>
<dbReference type="PROSITE" id="PS00211">
    <property type="entry name" value="ABC_TRANSPORTER_1"/>
    <property type="match status" value="1"/>
</dbReference>
<dbReference type="PROSITE" id="PS50893">
    <property type="entry name" value="ABC_TRANSPORTER_2"/>
    <property type="match status" value="1"/>
</dbReference>
<dbReference type="PROSITE" id="PS51288">
    <property type="entry name" value="THIQ"/>
    <property type="match status" value="1"/>
</dbReference>
<feature type="chain" id="PRO_0000274451" description="Thiamine import ATP-binding protein ThiQ">
    <location>
        <begin position="1"/>
        <end position="253"/>
    </location>
</feature>
<feature type="domain" description="ABC transporter" evidence="1">
    <location>
        <begin position="8"/>
        <end position="236"/>
    </location>
</feature>
<feature type="binding site" evidence="1">
    <location>
        <begin position="38"/>
        <end position="45"/>
    </location>
    <ligand>
        <name>ATP</name>
        <dbReference type="ChEBI" id="CHEBI:30616"/>
    </ligand>
</feature>
<keyword id="KW-0067">ATP-binding</keyword>
<keyword id="KW-0997">Cell inner membrane</keyword>
<keyword id="KW-1003">Cell membrane</keyword>
<keyword id="KW-0472">Membrane</keyword>
<keyword id="KW-0547">Nucleotide-binding</keyword>
<keyword id="KW-1278">Translocase</keyword>
<keyword id="KW-0813">Transport</keyword>
<name>THIQ_RHILO</name>
<proteinExistence type="inferred from homology"/>
<evidence type="ECO:0000255" key="1">
    <source>
        <dbReference type="HAMAP-Rule" id="MF_01723"/>
    </source>
</evidence>